<reference key="1">
    <citation type="journal article" date="2010" name="Genome Biol.">
        <title>Structure and dynamics of the pan-genome of Streptococcus pneumoniae and closely related species.</title>
        <authorList>
            <person name="Donati C."/>
            <person name="Hiller N.L."/>
            <person name="Tettelin H."/>
            <person name="Muzzi A."/>
            <person name="Croucher N.J."/>
            <person name="Angiuoli S.V."/>
            <person name="Oggioni M."/>
            <person name="Dunning Hotopp J.C."/>
            <person name="Hu F.Z."/>
            <person name="Riley D.R."/>
            <person name="Covacci A."/>
            <person name="Mitchell T.J."/>
            <person name="Bentley S.D."/>
            <person name="Kilian M."/>
            <person name="Ehrlich G.D."/>
            <person name="Rappuoli R."/>
            <person name="Moxon E.R."/>
            <person name="Masignani V."/>
        </authorList>
    </citation>
    <scope>NUCLEOTIDE SEQUENCE [LARGE SCALE GENOMIC DNA]</scope>
    <source>
        <strain>Taiwan19F-14</strain>
    </source>
</reference>
<comment type="similarity">
    <text evidence="1">Belongs to the bacterial ribosomal protein bL28 family.</text>
</comment>
<feature type="chain" id="PRO_1000195945" description="Large ribosomal subunit protein bL28">
    <location>
        <begin position="1"/>
        <end position="62"/>
    </location>
</feature>
<proteinExistence type="inferred from homology"/>
<sequence>MAKVCYFTGRKTVSGNNRSHAMNQTKRAVKPNLQKVTVLIDGKPKKVWASARALKSGKVERV</sequence>
<evidence type="ECO:0000255" key="1">
    <source>
        <dbReference type="HAMAP-Rule" id="MF_00373"/>
    </source>
</evidence>
<evidence type="ECO:0000305" key="2"/>
<name>RL28_STRZT</name>
<accession>C1CPV0</accession>
<organism>
    <name type="scientific">Streptococcus pneumoniae (strain Taiwan19F-14)</name>
    <dbReference type="NCBI Taxonomy" id="487213"/>
    <lineage>
        <taxon>Bacteria</taxon>
        <taxon>Bacillati</taxon>
        <taxon>Bacillota</taxon>
        <taxon>Bacilli</taxon>
        <taxon>Lactobacillales</taxon>
        <taxon>Streptococcaceae</taxon>
        <taxon>Streptococcus</taxon>
    </lineage>
</organism>
<protein>
    <recommendedName>
        <fullName evidence="1">Large ribosomal subunit protein bL28</fullName>
    </recommendedName>
    <alternativeName>
        <fullName evidence="2">50S ribosomal protein L28</fullName>
    </alternativeName>
</protein>
<gene>
    <name evidence="1" type="primary">rpmB</name>
    <name type="ordered locus">SPT_0478</name>
</gene>
<dbReference type="EMBL" id="CP000921">
    <property type="protein sequence ID" value="ACO22784.1"/>
    <property type="molecule type" value="Genomic_DNA"/>
</dbReference>
<dbReference type="RefSeq" id="WP_001140948.1">
    <property type="nucleotide sequence ID" value="NC_012469.1"/>
</dbReference>
<dbReference type="SMR" id="C1CPV0"/>
<dbReference type="GeneID" id="93921138"/>
<dbReference type="KEGG" id="snt:SPT_0478"/>
<dbReference type="HOGENOM" id="CLU_064548_7_1_9"/>
<dbReference type="GO" id="GO:1990904">
    <property type="term" value="C:ribonucleoprotein complex"/>
    <property type="evidence" value="ECO:0007669"/>
    <property type="project" value="UniProtKB-KW"/>
</dbReference>
<dbReference type="GO" id="GO:0005840">
    <property type="term" value="C:ribosome"/>
    <property type="evidence" value="ECO:0007669"/>
    <property type="project" value="UniProtKB-KW"/>
</dbReference>
<dbReference type="GO" id="GO:0003735">
    <property type="term" value="F:structural constituent of ribosome"/>
    <property type="evidence" value="ECO:0007669"/>
    <property type="project" value="InterPro"/>
</dbReference>
<dbReference type="GO" id="GO:0006412">
    <property type="term" value="P:translation"/>
    <property type="evidence" value="ECO:0007669"/>
    <property type="project" value="UniProtKB-UniRule"/>
</dbReference>
<dbReference type="Gene3D" id="2.30.170.40">
    <property type="entry name" value="Ribosomal protein L28/L24"/>
    <property type="match status" value="1"/>
</dbReference>
<dbReference type="HAMAP" id="MF_00373">
    <property type="entry name" value="Ribosomal_bL28"/>
    <property type="match status" value="1"/>
</dbReference>
<dbReference type="InterPro" id="IPR050096">
    <property type="entry name" value="Bacterial_rp_bL28"/>
</dbReference>
<dbReference type="InterPro" id="IPR026569">
    <property type="entry name" value="Ribosomal_bL28"/>
</dbReference>
<dbReference type="InterPro" id="IPR034704">
    <property type="entry name" value="Ribosomal_bL28/bL31-like_sf"/>
</dbReference>
<dbReference type="InterPro" id="IPR001383">
    <property type="entry name" value="Ribosomal_bL28_bact-type"/>
</dbReference>
<dbReference type="InterPro" id="IPR037147">
    <property type="entry name" value="Ribosomal_bL28_sf"/>
</dbReference>
<dbReference type="NCBIfam" id="TIGR00009">
    <property type="entry name" value="L28"/>
    <property type="match status" value="1"/>
</dbReference>
<dbReference type="PANTHER" id="PTHR39080">
    <property type="entry name" value="50S RIBOSOMAL PROTEIN L28"/>
    <property type="match status" value="1"/>
</dbReference>
<dbReference type="PANTHER" id="PTHR39080:SF1">
    <property type="entry name" value="LARGE RIBOSOMAL SUBUNIT PROTEIN BL28A"/>
    <property type="match status" value="1"/>
</dbReference>
<dbReference type="Pfam" id="PF00830">
    <property type="entry name" value="Ribosomal_L28"/>
    <property type="match status" value="1"/>
</dbReference>
<dbReference type="SUPFAM" id="SSF143800">
    <property type="entry name" value="L28p-like"/>
    <property type="match status" value="1"/>
</dbReference>
<keyword id="KW-0687">Ribonucleoprotein</keyword>
<keyword id="KW-0689">Ribosomal protein</keyword>